<feature type="signal peptide" evidence="3">
    <location>
        <begin position="1"/>
        <end position="20"/>
    </location>
</feature>
<feature type="propeptide" id="PRO_0000006888" evidence="3">
    <location>
        <begin position="21"/>
        <end position="26"/>
    </location>
</feature>
<feature type="peptide" id="PRO_0000006889" description="Beta-defensin 1">
    <location>
        <begin position="27"/>
        <end position="64"/>
    </location>
</feature>
<feature type="disulfide bond" evidence="1">
    <location>
        <begin position="31"/>
        <end position="60"/>
    </location>
</feature>
<feature type="disulfide bond" evidence="1">
    <location>
        <begin position="38"/>
        <end position="53"/>
    </location>
</feature>
<feature type="disulfide bond" evidence="1">
    <location>
        <begin position="43"/>
        <end position="61"/>
    </location>
</feature>
<reference key="1">
    <citation type="journal article" date="1999" name="Infect. Immun.">
        <title>Differential expression of caprine beta-defensins in digestive and respiratory tissues.</title>
        <authorList>
            <person name="Zhao C."/>
            <person name="Nguyen T."/>
            <person name="Liu L."/>
            <person name="Shamova O."/>
            <person name="Brogden K."/>
            <person name="Lehrer R.I."/>
        </authorList>
    </citation>
    <scope>NUCLEOTIDE SEQUENCE [MRNA]</scope>
    <source>
        <tissue>Tongue</tissue>
    </source>
</reference>
<sequence length="64" mass="7258">MRLHHLLLVLFFLVLSAGSGFTQGIRSRRSCHRNKGVCALTRCPRNMRQIGTCFGPPVKCCRKK</sequence>
<evidence type="ECO:0000250" key="1"/>
<evidence type="ECO:0000250" key="2">
    <source>
        <dbReference type="UniProtKB" id="P60022"/>
    </source>
</evidence>
<evidence type="ECO:0000255" key="3"/>
<evidence type="ECO:0000305" key="4"/>
<gene>
    <name type="primary">DEFB1</name>
</gene>
<dbReference type="EMBL" id="Y17679">
    <property type="protein sequence ID" value="CAA76811.1"/>
    <property type="molecule type" value="mRNA"/>
</dbReference>
<dbReference type="SMR" id="O97946"/>
<dbReference type="STRING" id="9925.ENSCHIP00000001150"/>
<dbReference type="Proteomes" id="UP000291000">
    <property type="component" value="Unassembled WGS sequence"/>
</dbReference>
<dbReference type="Proteomes" id="UP000694566">
    <property type="component" value="Unplaced"/>
</dbReference>
<dbReference type="GO" id="GO:0005615">
    <property type="term" value="C:extracellular space"/>
    <property type="evidence" value="ECO:0007669"/>
    <property type="project" value="TreeGrafter"/>
</dbReference>
<dbReference type="GO" id="GO:0016020">
    <property type="term" value="C:membrane"/>
    <property type="evidence" value="ECO:0000250"/>
    <property type="project" value="UniProtKB"/>
</dbReference>
<dbReference type="GO" id="GO:1990742">
    <property type="term" value="C:microvesicle"/>
    <property type="evidence" value="ECO:0000250"/>
    <property type="project" value="UniProtKB"/>
</dbReference>
<dbReference type="GO" id="GO:0097225">
    <property type="term" value="C:sperm midpiece"/>
    <property type="evidence" value="ECO:0000250"/>
    <property type="project" value="UniProtKB"/>
</dbReference>
<dbReference type="GO" id="GO:0031731">
    <property type="term" value="F:CCR6 chemokine receptor binding"/>
    <property type="evidence" value="ECO:0000250"/>
    <property type="project" value="UniProtKB"/>
</dbReference>
<dbReference type="GO" id="GO:0042056">
    <property type="term" value="F:chemoattractant activity"/>
    <property type="evidence" value="ECO:0007669"/>
    <property type="project" value="TreeGrafter"/>
</dbReference>
<dbReference type="GO" id="GO:0042802">
    <property type="term" value="F:identical protein binding"/>
    <property type="evidence" value="ECO:0000250"/>
    <property type="project" value="UniProtKB"/>
</dbReference>
<dbReference type="GO" id="GO:0019722">
    <property type="term" value="P:calcium-mediated signaling"/>
    <property type="evidence" value="ECO:0000250"/>
    <property type="project" value="UniProtKB"/>
</dbReference>
<dbReference type="GO" id="GO:0060326">
    <property type="term" value="P:cell chemotaxis"/>
    <property type="evidence" value="ECO:0007669"/>
    <property type="project" value="TreeGrafter"/>
</dbReference>
<dbReference type="GO" id="GO:0050829">
    <property type="term" value="P:defense response to Gram-negative bacterium"/>
    <property type="evidence" value="ECO:0000250"/>
    <property type="project" value="UniProtKB"/>
</dbReference>
<dbReference type="GO" id="GO:0050830">
    <property type="term" value="P:defense response to Gram-positive bacterium"/>
    <property type="evidence" value="ECO:0000250"/>
    <property type="project" value="UniProtKB"/>
</dbReference>
<dbReference type="GO" id="GO:0060474">
    <property type="term" value="P:positive regulation of flagellated sperm motility involved in capacitation"/>
    <property type="evidence" value="ECO:0000250"/>
    <property type="project" value="UniProtKB"/>
</dbReference>
<dbReference type="FunFam" id="3.10.360.10:FF:000001">
    <property type="entry name" value="Beta-defensin 1"/>
    <property type="match status" value="1"/>
</dbReference>
<dbReference type="Gene3D" id="3.10.360.10">
    <property type="entry name" value="Antimicrobial Peptide, Beta-defensin 2, Chain A"/>
    <property type="match status" value="1"/>
</dbReference>
<dbReference type="InterPro" id="IPR006080">
    <property type="entry name" value="Beta/alpha-defensin_C"/>
</dbReference>
<dbReference type="InterPro" id="IPR001855">
    <property type="entry name" value="Defensin_beta-like"/>
</dbReference>
<dbReference type="PANTHER" id="PTHR20515">
    <property type="entry name" value="BETA-DEFENSIN"/>
    <property type="match status" value="1"/>
</dbReference>
<dbReference type="PANTHER" id="PTHR20515:SF2">
    <property type="entry name" value="DEFENSIN BETA 4A"/>
    <property type="match status" value="1"/>
</dbReference>
<dbReference type="Pfam" id="PF00711">
    <property type="entry name" value="Defensin_beta"/>
    <property type="match status" value="1"/>
</dbReference>
<dbReference type="SMART" id="SM00048">
    <property type="entry name" value="DEFSN"/>
    <property type="match status" value="1"/>
</dbReference>
<dbReference type="SUPFAM" id="SSF57392">
    <property type="entry name" value="Defensin-like"/>
    <property type="match status" value="1"/>
</dbReference>
<comment type="function">
    <text evidence="2">Has bactericidal activity. May act as a ligand for C-C chemokine receptor CCR6. Positively regulates the sperm motility and bactericidal activity in a CCR6-dependent manner. Binds to CCR6 and triggers Ca2+ mobilization in the sperm which is important for its motility.</text>
</comment>
<comment type="subunit">
    <text evidence="2">Monomer. Homodimer.</text>
</comment>
<comment type="subcellular location">
    <subcellularLocation>
        <location evidence="2">Secreted</location>
    </subcellularLocation>
    <subcellularLocation>
        <location evidence="2">Membrane</location>
    </subcellularLocation>
    <text evidence="2">Associates with tumor cell membrane-derived microvesicles.</text>
</comment>
<comment type="similarity">
    <text evidence="4">Belongs to the beta-defensin family.</text>
</comment>
<name>DEFB1_CAPHI</name>
<accession>O97946</accession>
<organism>
    <name type="scientific">Capra hircus</name>
    <name type="common">Goat</name>
    <dbReference type="NCBI Taxonomy" id="9925"/>
    <lineage>
        <taxon>Eukaryota</taxon>
        <taxon>Metazoa</taxon>
        <taxon>Chordata</taxon>
        <taxon>Craniata</taxon>
        <taxon>Vertebrata</taxon>
        <taxon>Euteleostomi</taxon>
        <taxon>Mammalia</taxon>
        <taxon>Eutheria</taxon>
        <taxon>Laurasiatheria</taxon>
        <taxon>Artiodactyla</taxon>
        <taxon>Ruminantia</taxon>
        <taxon>Pecora</taxon>
        <taxon>Bovidae</taxon>
        <taxon>Caprinae</taxon>
        <taxon>Capra</taxon>
    </lineage>
</organism>
<proteinExistence type="inferred from homology"/>
<keyword id="KW-0044">Antibiotic</keyword>
<keyword id="KW-0929">Antimicrobial</keyword>
<keyword id="KW-0211">Defensin</keyword>
<keyword id="KW-1015">Disulfide bond</keyword>
<keyword id="KW-0472">Membrane</keyword>
<keyword id="KW-1185">Reference proteome</keyword>
<keyword id="KW-0964">Secreted</keyword>
<keyword id="KW-0732">Signal</keyword>
<protein>
    <recommendedName>
        <fullName>Beta-defensin 1</fullName>
        <shortName>BD-1</shortName>
    </recommendedName>
    <alternativeName>
        <fullName>Defensin, beta 1</fullName>
    </alternativeName>
</protein>